<dbReference type="EC" id="6.3.5.7" evidence="1"/>
<dbReference type="EMBL" id="BA000012">
    <property type="protein sequence ID" value="BAB48218.1"/>
    <property type="molecule type" value="Genomic_DNA"/>
</dbReference>
<dbReference type="RefSeq" id="WP_010909573.1">
    <property type="nucleotide sequence ID" value="NC_002678.2"/>
</dbReference>
<dbReference type="SMR" id="Q98M95"/>
<dbReference type="KEGG" id="mlo:mll0675"/>
<dbReference type="PATRIC" id="fig|266835.9.peg.542"/>
<dbReference type="eggNOG" id="COG0154">
    <property type="taxonomic scope" value="Bacteria"/>
</dbReference>
<dbReference type="HOGENOM" id="CLU_009600_0_3_5"/>
<dbReference type="Proteomes" id="UP000000552">
    <property type="component" value="Chromosome"/>
</dbReference>
<dbReference type="GO" id="GO:0030956">
    <property type="term" value="C:glutamyl-tRNA(Gln) amidotransferase complex"/>
    <property type="evidence" value="ECO:0007669"/>
    <property type="project" value="InterPro"/>
</dbReference>
<dbReference type="GO" id="GO:0005524">
    <property type="term" value="F:ATP binding"/>
    <property type="evidence" value="ECO:0007669"/>
    <property type="project" value="UniProtKB-KW"/>
</dbReference>
<dbReference type="GO" id="GO:0050567">
    <property type="term" value="F:glutaminyl-tRNA synthase (glutamine-hydrolyzing) activity"/>
    <property type="evidence" value="ECO:0007669"/>
    <property type="project" value="UniProtKB-UniRule"/>
</dbReference>
<dbReference type="GO" id="GO:0006412">
    <property type="term" value="P:translation"/>
    <property type="evidence" value="ECO:0007669"/>
    <property type="project" value="UniProtKB-UniRule"/>
</dbReference>
<dbReference type="Gene3D" id="3.90.1300.10">
    <property type="entry name" value="Amidase signature (AS) domain"/>
    <property type="match status" value="1"/>
</dbReference>
<dbReference type="HAMAP" id="MF_00120">
    <property type="entry name" value="GatA"/>
    <property type="match status" value="1"/>
</dbReference>
<dbReference type="InterPro" id="IPR000120">
    <property type="entry name" value="Amidase"/>
</dbReference>
<dbReference type="InterPro" id="IPR020556">
    <property type="entry name" value="Amidase_CS"/>
</dbReference>
<dbReference type="InterPro" id="IPR023631">
    <property type="entry name" value="Amidase_dom"/>
</dbReference>
<dbReference type="InterPro" id="IPR036928">
    <property type="entry name" value="AS_sf"/>
</dbReference>
<dbReference type="InterPro" id="IPR004412">
    <property type="entry name" value="GatA"/>
</dbReference>
<dbReference type="PANTHER" id="PTHR11895:SF151">
    <property type="entry name" value="GLUTAMYL-TRNA(GLN) AMIDOTRANSFERASE SUBUNIT A"/>
    <property type="match status" value="1"/>
</dbReference>
<dbReference type="PANTHER" id="PTHR11895">
    <property type="entry name" value="TRANSAMIDASE"/>
    <property type="match status" value="1"/>
</dbReference>
<dbReference type="Pfam" id="PF01425">
    <property type="entry name" value="Amidase"/>
    <property type="match status" value="2"/>
</dbReference>
<dbReference type="SUPFAM" id="SSF75304">
    <property type="entry name" value="Amidase signature (AS) enzymes"/>
    <property type="match status" value="1"/>
</dbReference>
<dbReference type="PROSITE" id="PS00571">
    <property type="entry name" value="AMIDASES"/>
    <property type="match status" value="1"/>
</dbReference>
<feature type="chain" id="PRO_0000105193" description="Glutamyl-tRNA(Gln) amidotransferase subunit A">
    <location>
        <begin position="1"/>
        <end position="521"/>
    </location>
</feature>
<feature type="active site" description="Charge relay system" evidence="1">
    <location>
        <position position="79"/>
    </location>
</feature>
<feature type="active site" description="Charge relay system" evidence="1">
    <location>
        <position position="187"/>
    </location>
</feature>
<feature type="active site" description="Acyl-ester intermediate" evidence="1">
    <location>
        <position position="211"/>
    </location>
</feature>
<evidence type="ECO:0000255" key="1">
    <source>
        <dbReference type="HAMAP-Rule" id="MF_00120"/>
    </source>
</evidence>
<name>GATA_RHILO</name>
<keyword id="KW-0067">ATP-binding</keyword>
<keyword id="KW-0436">Ligase</keyword>
<keyword id="KW-0547">Nucleotide-binding</keyword>
<keyword id="KW-0648">Protein biosynthesis</keyword>
<reference key="1">
    <citation type="journal article" date="2000" name="DNA Res.">
        <title>Complete genome structure of the nitrogen-fixing symbiotic bacterium Mesorhizobium loti.</title>
        <authorList>
            <person name="Kaneko T."/>
            <person name="Nakamura Y."/>
            <person name="Sato S."/>
            <person name="Asamizu E."/>
            <person name="Kato T."/>
            <person name="Sasamoto S."/>
            <person name="Watanabe A."/>
            <person name="Idesawa K."/>
            <person name="Ishikawa A."/>
            <person name="Kawashima K."/>
            <person name="Kimura T."/>
            <person name="Kishida Y."/>
            <person name="Kiyokawa C."/>
            <person name="Kohara M."/>
            <person name="Matsumoto M."/>
            <person name="Matsuno A."/>
            <person name="Mochizuki Y."/>
            <person name="Nakayama S."/>
            <person name="Nakazaki N."/>
            <person name="Shimpo S."/>
            <person name="Sugimoto M."/>
            <person name="Takeuchi C."/>
            <person name="Yamada M."/>
            <person name="Tabata S."/>
        </authorList>
    </citation>
    <scope>NUCLEOTIDE SEQUENCE [LARGE SCALE GENOMIC DNA]</scope>
    <source>
        <strain>LMG 29417 / CECT 9101 / MAFF 303099</strain>
    </source>
</reference>
<accession>Q98M95</accession>
<gene>
    <name evidence="1" type="primary">gatA</name>
    <name type="ordered locus">mll0675</name>
</gene>
<proteinExistence type="inferred from homology"/>
<comment type="function">
    <text evidence="1">Allows the formation of correctly charged Gln-tRNA(Gln) through the transamidation of misacylated Glu-tRNA(Gln) in organisms which lack glutaminyl-tRNA synthetase. The reaction takes place in the presence of glutamine and ATP through an activated gamma-phospho-Glu-tRNA(Gln).</text>
</comment>
<comment type="catalytic activity">
    <reaction evidence="1">
        <text>L-glutamyl-tRNA(Gln) + L-glutamine + ATP + H2O = L-glutaminyl-tRNA(Gln) + L-glutamate + ADP + phosphate + H(+)</text>
        <dbReference type="Rhea" id="RHEA:17521"/>
        <dbReference type="Rhea" id="RHEA-COMP:9681"/>
        <dbReference type="Rhea" id="RHEA-COMP:9684"/>
        <dbReference type="ChEBI" id="CHEBI:15377"/>
        <dbReference type="ChEBI" id="CHEBI:15378"/>
        <dbReference type="ChEBI" id="CHEBI:29985"/>
        <dbReference type="ChEBI" id="CHEBI:30616"/>
        <dbReference type="ChEBI" id="CHEBI:43474"/>
        <dbReference type="ChEBI" id="CHEBI:58359"/>
        <dbReference type="ChEBI" id="CHEBI:78520"/>
        <dbReference type="ChEBI" id="CHEBI:78521"/>
        <dbReference type="ChEBI" id="CHEBI:456216"/>
        <dbReference type="EC" id="6.3.5.7"/>
    </reaction>
</comment>
<comment type="subunit">
    <text evidence="1">Heterotrimer of A, B and C subunits.</text>
</comment>
<comment type="similarity">
    <text evidence="1">Belongs to the amidase family. GatA subfamily.</text>
</comment>
<protein>
    <recommendedName>
        <fullName evidence="1">Glutamyl-tRNA(Gln) amidotransferase subunit A</fullName>
        <shortName evidence="1">Glu-ADT subunit A</shortName>
        <ecNumber evidence="1">6.3.5.7</ecNumber>
    </recommendedName>
</protein>
<sequence>MSDLTRLTISQARAKLRGKEITATEITEAYLSAIDRANPALNAYVAVTGDRARDMAKASDARLVKGEGGALEGIPLGIKDLFGTEGVHTQACSHVLDGFKPLYESTVTANLWADGAVMLGKLNMDEFAMGSSNETSYYGPVINPWRRSRLDTVVMPTTHQGDGGFVSAGGTKTQRSLDNAQLVPGGSSGGSATAVSAFLCAGATATDTGGSIRQPAAFTGTVGIKPTYGRCSRWGIVAFASSLDQAGPIARDVRDAAILLKSMASVDPKDTTSVDRPVPDYEAAIGKPIKGMKVGIPKEYRVDGMPEEIEALWQKGIAWLRDAGAEIVDISLPHTKYALPAYYIVAPAEASSNLARYDGVRYGLRVPGKDIVEMYEKTRAAGFGREVKRRIMIGTYVLSAGYYDAYYLQAQKVRNLIKRDFENVFAAGVDVILTPATPSAAFGIADEDMAADPVKMYLNDIFTVTVNMAGLPGIAVPAGLDPKGLPLGLQLIGRPFEEETLFQTAAVIEQAAGTFQPEKWW</sequence>
<organism>
    <name type="scientific">Mesorhizobium japonicum (strain LMG 29417 / CECT 9101 / MAFF 303099)</name>
    <name type="common">Mesorhizobium loti (strain MAFF 303099)</name>
    <dbReference type="NCBI Taxonomy" id="266835"/>
    <lineage>
        <taxon>Bacteria</taxon>
        <taxon>Pseudomonadati</taxon>
        <taxon>Pseudomonadota</taxon>
        <taxon>Alphaproteobacteria</taxon>
        <taxon>Hyphomicrobiales</taxon>
        <taxon>Phyllobacteriaceae</taxon>
        <taxon>Mesorhizobium</taxon>
    </lineage>
</organism>